<comment type="function">
    <text evidence="1">Required for association of the cohesin complex with chromatin during interphase. Plays a role in sister chromatid cohesion and normal progression through prometaphase (By similarity).</text>
</comment>
<comment type="subunit">
    <text evidence="1">Interacts with Nipped-B to form the cohesin loading complex.</text>
</comment>
<comment type="subcellular location">
    <subcellularLocation>
        <location evidence="1">Nucleus</location>
        <location evidence="1">Nucleoplasm</location>
    </subcellularLocation>
    <text evidence="1">Binds to chromatin from the end of mitosis until prophase.</text>
</comment>
<comment type="similarity">
    <text evidence="3">Belongs to the SCC4/mau-2 family.</text>
</comment>
<feature type="chain" id="PRO_0000382733" description="MAU2 chromatid cohesion factor homolog">
    <location>
        <begin position="1"/>
        <end position="625"/>
    </location>
</feature>
<feature type="repeat" description="TPR 1">
    <location>
        <begin position="96"/>
        <end position="129"/>
    </location>
</feature>
<feature type="repeat" description="TPR 2">
    <location>
        <begin position="451"/>
        <end position="484"/>
    </location>
</feature>
<feature type="repeat" description="TPR 3">
    <location>
        <begin position="491"/>
        <end position="524"/>
    </location>
</feature>
<feature type="region of interest" description="Disordered" evidence="2">
    <location>
        <begin position="600"/>
        <end position="625"/>
    </location>
</feature>
<feature type="compositionally biased region" description="Polar residues" evidence="2">
    <location>
        <begin position="600"/>
        <end position="611"/>
    </location>
</feature>
<feature type="compositionally biased region" description="Low complexity" evidence="2">
    <location>
        <begin position="612"/>
        <end position="625"/>
    </location>
</feature>
<accession>B4K4X6</accession>
<evidence type="ECO:0000250" key="1"/>
<evidence type="ECO:0000256" key="2">
    <source>
        <dbReference type="SAM" id="MobiDB-lite"/>
    </source>
</evidence>
<evidence type="ECO:0000305" key="3"/>
<dbReference type="EMBL" id="CH933806">
    <property type="protein sequence ID" value="EDW16129.1"/>
    <property type="molecule type" value="Genomic_DNA"/>
</dbReference>
<dbReference type="FunCoup" id="B4K4X6">
    <property type="interactions" value="2772"/>
</dbReference>
<dbReference type="EnsemblMetazoa" id="FBtr0173128">
    <property type="protein sequence ID" value="FBpp0171620"/>
    <property type="gene ID" value="FBgn0145131"/>
</dbReference>
<dbReference type="EnsemblMetazoa" id="XM_002000632.4">
    <property type="protein sequence ID" value="XP_002000668.1"/>
    <property type="gene ID" value="LOC6574634"/>
</dbReference>
<dbReference type="GeneID" id="6574634"/>
<dbReference type="KEGG" id="dmo:Dmoj_GI22403"/>
<dbReference type="CTD" id="23383"/>
<dbReference type="eggNOG" id="KOG2300">
    <property type="taxonomic scope" value="Eukaryota"/>
</dbReference>
<dbReference type="HOGENOM" id="CLU_030238_0_0_1"/>
<dbReference type="InParanoid" id="B4K4X6"/>
<dbReference type="OMA" id="QDAWYLS"/>
<dbReference type="OrthoDB" id="5565328at2759"/>
<dbReference type="PhylomeDB" id="B4K4X6"/>
<dbReference type="Proteomes" id="UP000009192">
    <property type="component" value="Unassembled WGS sequence"/>
</dbReference>
<dbReference type="GO" id="GO:0000785">
    <property type="term" value="C:chromatin"/>
    <property type="evidence" value="ECO:0000250"/>
    <property type="project" value="UniProtKB"/>
</dbReference>
<dbReference type="GO" id="GO:0005654">
    <property type="term" value="C:nucleoplasm"/>
    <property type="evidence" value="ECO:0000250"/>
    <property type="project" value="UniProtKB"/>
</dbReference>
<dbReference type="GO" id="GO:0005634">
    <property type="term" value="C:nucleus"/>
    <property type="evidence" value="ECO:0000250"/>
    <property type="project" value="UniProtKB"/>
</dbReference>
<dbReference type="GO" id="GO:0032116">
    <property type="term" value="C:SMC loading complex"/>
    <property type="evidence" value="ECO:0000250"/>
    <property type="project" value="UniProtKB"/>
</dbReference>
<dbReference type="GO" id="GO:0051301">
    <property type="term" value="P:cell division"/>
    <property type="evidence" value="ECO:0007669"/>
    <property type="project" value="UniProtKB-KW"/>
</dbReference>
<dbReference type="GO" id="GO:0007059">
    <property type="term" value="P:chromosome segregation"/>
    <property type="evidence" value="ECO:0007669"/>
    <property type="project" value="UniProtKB-KW"/>
</dbReference>
<dbReference type="GO" id="GO:0034088">
    <property type="term" value="P:maintenance of mitotic sister chromatid cohesion"/>
    <property type="evidence" value="ECO:0000250"/>
    <property type="project" value="UniProtKB"/>
</dbReference>
<dbReference type="FunFam" id="1.25.40.10:FF:000373">
    <property type="entry name" value="MAU2 chromatid cohesion factor homolog"/>
    <property type="match status" value="1"/>
</dbReference>
<dbReference type="FunFam" id="1.25.40.10:FF:000915">
    <property type="entry name" value="MAU2 chromatid cohesion factor homolog"/>
    <property type="match status" value="1"/>
</dbReference>
<dbReference type="Gene3D" id="1.25.40.10">
    <property type="entry name" value="Tetratricopeptide repeat domain"/>
    <property type="match status" value="2"/>
</dbReference>
<dbReference type="InterPro" id="IPR019440">
    <property type="entry name" value="MAU2"/>
</dbReference>
<dbReference type="InterPro" id="IPR011990">
    <property type="entry name" value="TPR-like_helical_dom_sf"/>
</dbReference>
<dbReference type="PANTHER" id="PTHR21394">
    <property type="entry name" value="MAU2 CHROMATID COHESION FACTOR HOMOLOG"/>
    <property type="match status" value="1"/>
</dbReference>
<dbReference type="Pfam" id="PF10345">
    <property type="entry name" value="Cohesin_load"/>
    <property type="match status" value="1"/>
</dbReference>
<dbReference type="SUPFAM" id="SSF48452">
    <property type="entry name" value="TPR-like"/>
    <property type="match status" value="1"/>
</dbReference>
<name>SCC4_DROMO</name>
<organism>
    <name type="scientific">Drosophila mojavensis</name>
    <name type="common">Fruit fly</name>
    <dbReference type="NCBI Taxonomy" id="7230"/>
    <lineage>
        <taxon>Eukaryota</taxon>
        <taxon>Metazoa</taxon>
        <taxon>Ecdysozoa</taxon>
        <taxon>Arthropoda</taxon>
        <taxon>Hexapoda</taxon>
        <taxon>Insecta</taxon>
        <taxon>Pterygota</taxon>
        <taxon>Neoptera</taxon>
        <taxon>Endopterygota</taxon>
        <taxon>Diptera</taxon>
        <taxon>Brachycera</taxon>
        <taxon>Muscomorpha</taxon>
        <taxon>Ephydroidea</taxon>
        <taxon>Drosophilidae</taxon>
        <taxon>Drosophila</taxon>
    </lineage>
</organism>
<reference key="1">
    <citation type="journal article" date="2007" name="Nature">
        <title>Evolution of genes and genomes on the Drosophila phylogeny.</title>
        <authorList>
            <consortium name="Drosophila 12 genomes consortium"/>
        </authorList>
    </citation>
    <scope>NUCLEOTIDE SEQUENCE [LARGE SCALE GENOMIC DNA]</scope>
    <source>
        <strain>Tucson 15081-1352.22</strain>
    </source>
</reference>
<keyword id="KW-0131">Cell cycle</keyword>
<keyword id="KW-0132">Cell division</keyword>
<keyword id="KW-0159">Chromosome partition</keyword>
<keyword id="KW-0498">Mitosis</keyword>
<keyword id="KW-0539">Nucleus</keyword>
<keyword id="KW-1185">Reference proteome</keyword>
<keyword id="KW-0677">Repeat</keyword>
<keyword id="KW-0802">TPR repeat</keyword>
<protein>
    <recommendedName>
        <fullName>MAU2 chromatid cohesion factor homolog</fullName>
    </recommendedName>
    <alternativeName>
        <fullName>Cohesin loading complex subunit SCC4 homolog</fullName>
    </alternativeName>
</protein>
<gene>
    <name type="ORF">GI22403</name>
</gene>
<sequence>MSVVSTTPASQDACYISLLGLAEYFRTSQPPNIKKCIQCLQALFTFQPPSKVEARTHLQMGQVLMAYTCNIDLARRHLEQAWSIAEPLMNFDDVKFDTASLLAQLHLKTEQSSHAKAMLRRAVELSQNNVYWHCKLLLQLSQIHASDREYSLASDLLAVGAESAEEAGATYLKVLFLLSRAMILMIERKTNDVLALLNSAGQIIDNNIPNPHQKEYLKVFFLVLQVCYYLALGQVKTVKPSLKQLQMSIQTIMAPNWPSDETIFGGNQLEMFVWLPKEQLYVLVYLVTVSHSMMAGYMDKAQKYTEKALTQIEKLKQQEDKSILSVFKVILLEHIVMCRMVMGNRELAIREIAAARDVCLAVPHRNLLKRHSAQLHCLIGLYSMSTSFFEHAERQFLVCVNETTERDLKLFANLNLAIIYLRTKREADLKQILDAVSTENTHTYSSQALMGGFYYVQGLHAFHKNSFHEAKRFLRETLKMANAEDLNRLTSCSLVLLSHVFLSIGNSKESMNMVTPAMQLASKIPDIHVQLWGSAILKDLHRMSKDAQHEKEAYANHVKYSENLIADQRKCVQSAHHELINWFQGNPPVTSNSSLNPAVTVPTTETSTSALQQPQQPAAQFGQFY</sequence>
<proteinExistence type="inferred from homology"/>